<gene>
    <name type="primary">tusD</name>
    <name type="ordered locus">PA2605</name>
</gene>
<keyword id="KW-0963">Cytoplasm</keyword>
<keyword id="KW-1185">Reference proteome</keyword>
<keyword id="KW-0808">Transferase</keyword>
<dbReference type="EC" id="2.8.1.-"/>
<dbReference type="EMBL" id="AE004091">
    <property type="protein sequence ID" value="AAG05993.1"/>
    <property type="molecule type" value="Genomic_DNA"/>
</dbReference>
<dbReference type="PIR" id="H83319">
    <property type="entry name" value="H83319"/>
</dbReference>
<dbReference type="RefSeq" id="NP_251295.1">
    <property type="nucleotide sequence ID" value="NC_002516.2"/>
</dbReference>
<dbReference type="RefSeq" id="WP_003090387.1">
    <property type="nucleotide sequence ID" value="NZ_QZGE01000008.1"/>
</dbReference>
<dbReference type="SMR" id="Q9I0N3"/>
<dbReference type="FunCoup" id="Q9I0N3">
    <property type="interactions" value="95"/>
</dbReference>
<dbReference type="STRING" id="208964.PA2605"/>
<dbReference type="PaxDb" id="208964-PA2605"/>
<dbReference type="DNASU" id="882311"/>
<dbReference type="GeneID" id="882311"/>
<dbReference type="KEGG" id="pae:PA2605"/>
<dbReference type="PATRIC" id="fig|208964.12.peg.2726"/>
<dbReference type="PseudoCAP" id="PA2605"/>
<dbReference type="HOGENOM" id="CLU_132095_0_0_6"/>
<dbReference type="InParanoid" id="Q9I0N3"/>
<dbReference type="OrthoDB" id="9787483at2"/>
<dbReference type="PhylomeDB" id="Q9I0N3"/>
<dbReference type="BioCyc" id="PAER208964:G1FZ6-2645-MONOMER"/>
<dbReference type="Proteomes" id="UP000002438">
    <property type="component" value="Chromosome"/>
</dbReference>
<dbReference type="GO" id="GO:0005829">
    <property type="term" value="C:cytosol"/>
    <property type="evidence" value="ECO:0000318"/>
    <property type="project" value="GO_Central"/>
</dbReference>
<dbReference type="GO" id="GO:1990228">
    <property type="term" value="C:sulfurtransferase complex"/>
    <property type="evidence" value="ECO:0000318"/>
    <property type="project" value="GO_Central"/>
</dbReference>
<dbReference type="GO" id="GO:0097163">
    <property type="term" value="F:sulfur carrier activity"/>
    <property type="evidence" value="ECO:0000318"/>
    <property type="project" value="GO_Central"/>
</dbReference>
<dbReference type="GO" id="GO:0016783">
    <property type="term" value="F:sulfurtransferase activity"/>
    <property type="evidence" value="ECO:0007669"/>
    <property type="project" value="InterPro"/>
</dbReference>
<dbReference type="GO" id="GO:0002143">
    <property type="term" value="P:tRNA wobble position uridine thiolation"/>
    <property type="evidence" value="ECO:0000318"/>
    <property type="project" value="GO_Central"/>
</dbReference>
<dbReference type="FunFam" id="3.40.1260.10:FF:000001">
    <property type="entry name" value="Sulfurtransferase TusD"/>
    <property type="match status" value="1"/>
</dbReference>
<dbReference type="Gene3D" id="3.40.1260.10">
    <property type="entry name" value="DsrEFH-like"/>
    <property type="match status" value="1"/>
</dbReference>
<dbReference type="InterPro" id="IPR027396">
    <property type="entry name" value="DsrEFH-like"/>
</dbReference>
<dbReference type="InterPro" id="IPR003787">
    <property type="entry name" value="Sulphur_relay_DsrE/F-like"/>
</dbReference>
<dbReference type="InterPro" id="IPR017463">
    <property type="entry name" value="Sulphur_relay_TusD/DsrE"/>
</dbReference>
<dbReference type="NCBIfam" id="NF001237">
    <property type="entry name" value="PRK00207.1"/>
    <property type="match status" value="1"/>
</dbReference>
<dbReference type="NCBIfam" id="TIGR03012">
    <property type="entry name" value="sulf_tusD_dsrE"/>
    <property type="match status" value="1"/>
</dbReference>
<dbReference type="PANTHER" id="PTHR34874">
    <property type="entry name" value="PROTEIN YCHN"/>
    <property type="match status" value="1"/>
</dbReference>
<dbReference type="PANTHER" id="PTHR34874:SF3">
    <property type="entry name" value="SULFURTRANSFERASE TUSD"/>
    <property type="match status" value="1"/>
</dbReference>
<dbReference type="Pfam" id="PF02635">
    <property type="entry name" value="DsrE"/>
    <property type="match status" value="1"/>
</dbReference>
<dbReference type="SUPFAM" id="SSF75169">
    <property type="entry name" value="DsrEFH-like"/>
    <property type="match status" value="1"/>
</dbReference>
<sequence length="131" mass="14086">MKFAIALFDPPHSPAARRALRFSEAALAGGHEIVRLFFYQDGVHSASANVVSGQDEFDLPAAWRELVERNGLDAVVCIAAALRRGVLNAEEAERYGRPGANLGAPWELSGLGQLHEAAQSADRLVCFGGDR</sequence>
<comment type="function">
    <text evidence="1">Could be part of a sulfur-relay system.</text>
</comment>
<comment type="subcellular location">
    <subcellularLocation>
        <location evidence="1">Cytoplasm</location>
    </subcellularLocation>
</comment>
<comment type="similarity">
    <text evidence="2">Belongs to the DsrE/TusD family.</text>
</comment>
<name>TUSD_PSEAE</name>
<organism>
    <name type="scientific">Pseudomonas aeruginosa (strain ATCC 15692 / DSM 22644 / CIP 104116 / JCM 14847 / LMG 12228 / 1C / PRS 101 / PAO1)</name>
    <dbReference type="NCBI Taxonomy" id="208964"/>
    <lineage>
        <taxon>Bacteria</taxon>
        <taxon>Pseudomonadati</taxon>
        <taxon>Pseudomonadota</taxon>
        <taxon>Gammaproteobacteria</taxon>
        <taxon>Pseudomonadales</taxon>
        <taxon>Pseudomonadaceae</taxon>
        <taxon>Pseudomonas</taxon>
    </lineage>
</organism>
<protein>
    <recommendedName>
        <fullName>Sulfurtransferase TusD homolog</fullName>
        <ecNumber>2.8.1.-</ecNumber>
    </recommendedName>
</protein>
<evidence type="ECO:0000250" key="1"/>
<evidence type="ECO:0000305" key="2"/>
<feature type="chain" id="PRO_0000214732" description="Sulfurtransferase TusD homolog">
    <location>
        <begin position="1"/>
        <end position="131"/>
    </location>
</feature>
<feature type="active site" description="Cysteine persulfide intermediate" evidence="1">
    <location>
        <position position="77"/>
    </location>
</feature>
<proteinExistence type="inferred from homology"/>
<accession>Q9I0N3</accession>
<reference key="1">
    <citation type="journal article" date="2000" name="Nature">
        <title>Complete genome sequence of Pseudomonas aeruginosa PAO1, an opportunistic pathogen.</title>
        <authorList>
            <person name="Stover C.K."/>
            <person name="Pham X.-Q.T."/>
            <person name="Erwin A.L."/>
            <person name="Mizoguchi S.D."/>
            <person name="Warrener P."/>
            <person name="Hickey M.J."/>
            <person name="Brinkman F.S.L."/>
            <person name="Hufnagle W.O."/>
            <person name="Kowalik D.J."/>
            <person name="Lagrou M."/>
            <person name="Garber R.L."/>
            <person name="Goltry L."/>
            <person name="Tolentino E."/>
            <person name="Westbrock-Wadman S."/>
            <person name="Yuan Y."/>
            <person name="Brody L.L."/>
            <person name="Coulter S.N."/>
            <person name="Folger K.R."/>
            <person name="Kas A."/>
            <person name="Larbig K."/>
            <person name="Lim R.M."/>
            <person name="Smith K.A."/>
            <person name="Spencer D.H."/>
            <person name="Wong G.K.-S."/>
            <person name="Wu Z."/>
            <person name="Paulsen I.T."/>
            <person name="Reizer J."/>
            <person name="Saier M.H. Jr."/>
            <person name="Hancock R.E.W."/>
            <person name="Lory S."/>
            <person name="Olson M.V."/>
        </authorList>
    </citation>
    <scope>NUCLEOTIDE SEQUENCE [LARGE SCALE GENOMIC DNA]</scope>
    <source>
        <strain>ATCC 15692 / DSM 22644 / CIP 104116 / JCM 14847 / LMG 12228 / 1C / PRS 101 / PAO1</strain>
    </source>
</reference>